<keyword id="KW-0091">Biomineralization</keyword>
<keyword id="KW-0106">Calcium</keyword>
<keyword id="KW-0903">Direct protein sequencing</keyword>
<keyword id="KW-1015">Disulfide bond</keyword>
<keyword id="KW-0301">Gamma-carboxyglutamic acid</keyword>
<keyword id="KW-0372">Hormone</keyword>
<keyword id="KW-0479">Metal-binding</keyword>
<keyword id="KW-0964">Secreted</keyword>
<sequence length="45" mass="4951">AAGQLSLTQLESLREVCELNLACEHMMDTEGIIAAYTAYYGPIPY</sequence>
<dbReference type="SMR" id="P86867"/>
<dbReference type="GO" id="GO:0005576">
    <property type="term" value="C:extracellular region"/>
    <property type="evidence" value="ECO:0007669"/>
    <property type="project" value="UniProtKB-SubCell"/>
</dbReference>
<dbReference type="GO" id="GO:0005509">
    <property type="term" value="F:calcium ion binding"/>
    <property type="evidence" value="ECO:0007669"/>
    <property type="project" value="InterPro"/>
</dbReference>
<dbReference type="GO" id="GO:0005179">
    <property type="term" value="F:hormone activity"/>
    <property type="evidence" value="ECO:0000250"/>
    <property type="project" value="UniProtKB"/>
</dbReference>
<dbReference type="GO" id="GO:0046848">
    <property type="term" value="F:hydroxyapatite binding"/>
    <property type="evidence" value="ECO:0007669"/>
    <property type="project" value="TreeGrafter"/>
</dbReference>
<dbReference type="GO" id="GO:0008147">
    <property type="term" value="F:structural constituent of bone"/>
    <property type="evidence" value="ECO:0000250"/>
    <property type="project" value="UniProtKB"/>
</dbReference>
<dbReference type="GO" id="GO:0031214">
    <property type="term" value="P:biomineral tissue development"/>
    <property type="evidence" value="ECO:0007669"/>
    <property type="project" value="UniProtKB-KW"/>
</dbReference>
<dbReference type="GO" id="GO:0060348">
    <property type="term" value="P:bone development"/>
    <property type="evidence" value="ECO:0007669"/>
    <property type="project" value="InterPro"/>
</dbReference>
<dbReference type="GO" id="GO:0032869">
    <property type="term" value="P:cellular response to insulin stimulus"/>
    <property type="evidence" value="ECO:0000250"/>
    <property type="project" value="UniProtKB"/>
</dbReference>
<dbReference type="GO" id="GO:0042593">
    <property type="term" value="P:glucose homeostasis"/>
    <property type="evidence" value="ECO:0000250"/>
    <property type="project" value="UniProtKB"/>
</dbReference>
<dbReference type="GO" id="GO:1903011">
    <property type="term" value="P:negative regulation of bone development"/>
    <property type="evidence" value="ECO:0000250"/>
    <property type="project" value="UniProtKB"/>
</dbReference>
<dbReference type="GO" id="GO:0001649">
    <property type="term" value="P:osteoblast differentiation"/>
    <property type="evidence" value="ECO:0007669"/>
    <property type="project" value="TreeGrafter"/>
</dbReference>
<dbReference type="GO" id="GO:1900076">
    <property type="term" value="P:regulation of cellular response to insulin stimulus"/>
    <property type="evidence" value="ECO:0007669"/>
    <property type="project" value="InterPro"/>
</dbReference>
<dbReference type="GO" id="GO:0032571">
    <property type="term" value="P:response to vitamin K"/>
    <property type="evidence" value="ECO:0007669"/>
    <property type="project" value="InterPro"/>
</dbReference>
<dbReference type="GO" id="GO:0044342">
    <property type="term" value="P:type B pancreatic cell proliferation"/>
    <property type="evidence" value="ECO:0000250"/>
    <property type="project" value="UniProtKB"/>
</dbReference>
<dbReference type="InterPro" id="IPR035972">
    <property type="entry name" value="GLA-like_dom_SF"/>
</dbReference>
<dbReference type="InterPro" id="IPR000294">
    <property type="entry name" value="GLA_domain"/>
</dbReference>
<dbReference type="InterPro" id="IPR039176">
    <property type="entry name" value="Osteocalcin"/>
</dbReference>
<dbReference type="PANTHER" id="PTHR14235">
    <property type="entry name" value="OSTEOCALCIN"/>
    <property type="match status" value="1"/>
</dbReference>
<dbReference type="PANTHER" id="PTHR14235:SF0">
    <property type="entry name" value="OSTEOCALCIN"/>
    <property type="match status" value="1"/>
</dbReference>
<dbReference type="SUPFAM" id="SSF57630">
    <property type="entry name" value="GLA-domain"/>
    <property type="match status" value="1"/>
</dbReference>
<dbReference type="PROSITE" id="PS00011">
    <property type="entry name" value="GLA_1"/>
    <property type="match status" value="1"/>
</dbReference>
<dbReference type="PROSITE" id="PS50998">
    <property type="entry name" value="GLA_2"/>
    <property type="match status" value="1"/>
</dbReference>
<name>OSTC1_DIPSG</name>
<protein>
    <recommendedName>
        <fullName evidence="6">Osteocalcin 1</fullName>
        <shortName evidence="6">DsaOC1</shortName>
    </recommendedName>
    <alternativeName>
        <fullName evidence="6">Bone Gla protein</fullName>
        <shortName evidence="3">BGP</shortName>
    </alternativeName>
    <alternativeName>
        <fullName evidence="3">Gamma-carboxyglutamic acid-containing protein</fullName>
    </alternativeName>
</protein>
<accession>P86867</accession>
<gene>
    <name evidence="3" type="primary">bglap</name>
</gene>
<comment type="function">
    <text evidence="2">The carboxylated form is one of the main organic components of the bone matrix, which constitutes 1-2% of the total bone protein (By similarity). The carboxylated form binds strongly to apatite and calcium (By similarity).</text>
</comment>
<comment type="subcellular location">
    <subcellularLocation>
        <location evidence="2">Secreted</location>
    </subcellularLocation>
</comment>
<comment type="PTM">
    <text evidence="4">Gamma-carboxyglutamate residues are formed by vitamin K dependent carboxylation by GGCX. These residues are essential for the binding of calcium.</text>
</comment>
<comment type="similarity">
    <text evidence="7">Belongs to the osteocalcin/matrix Gla protein family.</text>
</comment>
<reference evidence="7" key="1">
    <citation type="journal article" date="2014" name="Fish Physiol. Biochem.">
        <title>Teleost fish osteocalcin 1 and 2 share the ability to bind the calcium mineral phase.</title>
        <authorList>
            <person name="Cavaco S."/>
            <person name="Williamson M.K."/>
            <person name="Rosa J."/>
            <person name="Roberto V."/>
            <person name="Cordeiro O."/>
            <person name="Price P.A."/>
            <person name="Leonor Cancela M."/>
            <person name="Laize V."/>
            <person name="Simes D.C."/>
        </authorList>
    </citation>
    <scope>PROTEIN SEQUENCE</scope>
    <source>
        <tissue evidence="6">Bone</tissue>
    </source>
</reference>
<proteinExistence type="evidence at protein level"/>
<organism evidence="6">
    <name type="scientific">Diplodus sargus</name>
    <name type="common">White seabream</name>
    <dbReference type="NCBI Taxonomy" id="38941"/>
    <lineage>
        <taxon>Eukaryota</taxon>
        <taxon>Metazoa</taxon>
        <taxon>Chordata</taxon>
        <taxon>Craniata</taxon>
        <taxon>Vertebrata</taxon>
        <taxon>Euteleostomi</taxon>
        <taxon>Actinopterygii</taxon>
        <taxon>Neopterygii</taxon>
        <taxon>Teleostei</taxon>
        <taxon>Neoteleostei</taxon>
        <taxon>Acanthomorphata</taxon>
        <taxon>Eupercaria</taxon>
        <taxon>Spariformes</taxon>
        <taxon>Sparidae</taxon>
        <taxon>Diplodus</taxon>
    </lineage>
</organism>
<evidence type="ECO:0000250" key="1">
    <source>
        <dbReference type="UniProtKB" id="P02820"/>
    </source>
</evidence>
<evidence type="ECO:0000250" key="2">
    <source>
        <dbReference type="UniProtKB" id="P86546"/>
    </source>
</evidence>
<evidence type="ECO:0000250" key="3">
    <source>
        <dbReference type="UniProtKB" id="Q800Y1"/>
    </source>
</evidence>
<evidence type="ECO:0000255" key="4">
    <source>
        <dbReference type="PROSITE-ProRule" id="PRU00463"/>
    </source>
</evidence>
<evidence type="ECO:0000269" key="5">
    <source>
    </source>
</evidence>
<evidence type="ECO:0000303" key="6">
    <source>
    </source>
</evidence>
<evidence type="ECO:0000305" key="7"/>
<feature type="chain" id="PRO_0000436919" description="Osteocalcin 1" evidence="5">
    <location>
        <begin position="1"/>
        <end position="45"/>
    </location>
</feature>
<feature type="domain" description="Gla" evidence="4">
    <location>
        <begin position="1"/>
        <end position="41"/>
    </location>
</feature>
<feature type="binding site" evidence="1">
    <location>
        <position position="11"/>
    </location>
    <ligand>
        <name>Ca(2+)</name>
        <dbReference type="ChEBI" id="CHEBI:29108"/>
        <label>1</label>
    </ligand>
</feature>
<feature type="binding site" evidence="1">
    <location>
        <position position="15"/>
    </location>
    <ligand>
        <name>Ca(2+)</name>
        <dbReference type="ChEBI" id="CHEBI:29108"/>
        <label>2</label>
    </ligand>
</feature>
<feature type="binding site" evidence="1">
    <location>
        <position position="18"/>
    </location>
    <ligand>
        <name>Ca(2+)</name>
        <dbReference type="ChEBI" id="CHEBI:29108"/>
        <label>2</label>
    </ligand>
</feature>
<feature type="binding site" evidence="1">
    <location>
        <position position="18"/>
    </location>
    <ligand>
        <name>Ca(2+)</name>
        <dbReference type="ChEBI" id="CHEBI:29108"/>
        <label>3</label>
    </ligand>
</feature>
<feature type="binding site" evidence="1">
    <location>
        <position position="24"/>
    </location>
    <ligand>
        <name>Ca(2+)</name>
        <dbReference type="ChEBI" id="CHEBI:29108"/>
        <label>3</label>
    </ligand>
</feature>
<feature type="modified residue" description="4-carboxyglutamate" evidence="3">
    <location>
        <position position="11"/>
    </location>
</feature>
<feature type="modified residue" description="4-carboxyglutamate" evidence="4">
    <location>
        <position position="15"/>
    </location>
</feature>
<feature type="modified residue" description="4-carboxyglutamate" evidence="4">
    <location>
        <position position="18"/>
    </location>
</feature>
<feature type="disulfide bond" evidence="4">
    <location>
        <begin position="17"/>
        <end position="23"/>
    </location>
</feature>